<sequence>MTVAVVRFGGSNCDRDAVRALAHLGVDAAVAWHDDGLPADTDGVVVPGGFSYGDYLRAGAMAAQSPVVAEVRALAADGVPVLGVCNGAQIGCEAGLAPGAFTTNASARFQCERVHLRVENATTPWTAAYSEGDVLEIPIAHGEGRFEIDDDAYADLVADDRVLFRYCNADGEVTEAANPNGSTGAVAGVTGDRDHVAVMMPHPERATLPALGATDGQGILGAFA</sequence>
<dbReference type="EC" id="6.3.5.3" evidence="1"/>
<dbReference type="EC" id="3.5.1.2" evidence="1"/>
<dbReference type="EMBL" id="AE004437">
    <property type="protein sequence ID" value="AAG20128.1"/>
    <property type="molecule type" value="Genomic_DNA"/>
</dbReference>
<dbReference type="PIR" id="D84345">
    <property type="entry name" value="D84345"/>
</dbReference>
<dbReference type="RefSeq" id="WP_010903428.1">
    <property type="nucleotide sequence ID" value="NC_002607.1"/>
</dbReference>
<dbReference type="SMR" id="Q9HNU2"/>
<dbReference type="FunCoup" id="Q9HNU2">
    <property type="interactions" value="14"/>
</dbReference>
<dbReference type="STRING" id="64091.VNG_1945G"/>
<dbReference type="PaxDb" id="64091-VNG_1945G"/>
<dbReference type="GeneID" id="89350140"/>
<dbReference type="KEGG" id="hal:VNG_1945G"/>
<dbReference type="PATRIC" id="fig|64091.14.peg.1487"/>
<dbReference type="HOGENOM" id="CLU_001031_3_1_2"/>
<dbReference type="InParanoid" id="Q9HNU2"/>
<dbReference type="OrthoDB" id="6486at2157"/>
<dbReference type="PhylomeDB" id="Q9HNU2"/>
<dbReference type="UniPathway" id="UPA00074">
    <property type="reaction ID" value="UER00128"/>
</dbReference>
<dbReference type="Proteomes" id="UP000000554">
    <property type="component" value="Chromosome"/>
</dbReference>
<dbReference type="GO" id="GO:0005737">
    <property type="term" value="C:cytoplasm"/>
    <property type="evidence" value="ECO:0007669"/>
    <property type="project" value="UniProtKB-SubCell"/>
</dbReference>
<dbReference type="GO" id="GO:0005524">
    <property type="term" value="F:ATP binding"/>
    <property type="evidence" value="ECO:0007669"/>
    <property type="project" value="UniProtKB-KW"/>
</dbReference>
<dbReference type="GO" id="GO:0004359">
    <property type="term" value="F:glutaminase activity"/>
    <property type="evidence" value="ECO:0007669"/>
    <property type="project" value="UniProtKB-EC"/>
</dbReference>
<dbReference type="GO" id="GO:0004642">
    <property type="term" value="F:phosphoribosylformylglycinamidine synthase activity"/>
    <property type="evidence" value="ECO:0007669"/>
    <property type="project" value="UniProtKB-UniRule"/>
</dbReference>
<dbReference type="GO" id="GO:0006189">
    <property type="term" value="P:'de novo' IMP biosynthetic process"/>
    <property type="evidence" value="ECO:0007669"/>
    <property type="project" value="UniProtKB-UniRule"/>
</dbReference>
<dbReference type="CDD" id="cd01740">
    <property type="entry name" value="GATase1_FGAR_AT"/>
    <property type="match status" value="1"/>
</dbReference>
<dbReference type="Gene3D" id="3.40.50.880">
    <property type="match status" value="1"/>
</dbReference>
<dbReference type="HAMAP" id="MF_00421">
    <property type="entry name" value="PurQ"/>
    <property type="match status" value="1"/>
</dbReference>
<dbReference type="InterPro" id="IPR029062">
    <property type="entry name" value="Class_I_gatase-like"/>
</dbReference>
<dbReference type="InterPro" id="IPR010075">
    <property type="entry name" value="PRibForGlyAmidine_synth_PurQ"/>
</dbReference>
<dbReference type="NCBIfam" id="TIGR01737">
    <property type="entry name" value="FGAM_synth_I"/>
    <property type="match status" value="1"/>
</dbReference>
<dbReference type="NCBIfam" id="NF002957">
    <property type="entry name" value="PRK03619.1"/>
    <property type="match status" value="1"/>
</dbReference>
<dbReference type="PANTHER" id="PTHR47552">
    <property type="entry name" value="PHOSPHORIBOSYLFORMYLGLYCINAMIDINE SYNTHASE SUBUNIT PURQ"/>
    <property type="match status" value="1"/>
</dbReference>
<dbReference type="PANTHER" id="PTHR47552:SF1">
    <property type="entry name" value="PHOSPHORIBOSYLFORMYLGLYCINAMIDINE SYNTHASE SUBUNIT PURQ"/>
    <property type="match status" value="1"/>
</dbReference>
<dbReference type="Pfam" id="PF13507">
    <property type="entry name" value="GATase_5"/>
    <property type="match status" value="1"/>
</dbReference>
<dbReference type="PIRSF" id="PIRSF001586">
    <property type="entry name" value="FGAM_synth_I"/>
    <property type="match status" value="1"/>
</dbReference>
<dbReference type="SMART" id="SM01211">
    <property type="entry name" value="GATase_5"/>
    <property type="match status" value="1"/>
</dbReference>
<dbReference type="SUPFAM" id="SSF52317">
    <property type="entry name" value="Class I glutamine amidotransferase-like"/>
    <property type="match status" value="1"/>
</dbReference>
<dbReference type="PROSITE" id="PS51273">
    <property type="entry name" value="GATASE_TYPE_1"/>
    <property type="match status" value="1"/>
</dbReference>
<gene>
    <name evidence="1" type="primary">purQ</name>
    <name type="ordered locus">VNG_1945G</name>
</gene>
<keyword id="KW-0067">ATP-binding</keyword>
<keyword id="KW-0963">Cytoplasm</keyword>
<keyword id="KW-0315">Glutamine amidotransferase</keyword>
<keyword id="KW-0378">Hydrolase</keyword>
<keyword id="KW-0436">Ligase</keyword>
<keyword id="KW-0547">Nucleotide-binding</keyword>
<keyword id="KW-0658">Purine biosynthesis</keyword>
<keyword id="KW-1185">Reference proteome</keyword>
<protein>
    <recommendedName>
        <fullName evidence="1">Phosphoribosylformylglycinamidine synthase subunit PurQ</fullName>
        <shortName evidence="1">FGAM synthase</shortName>
        <ecNumber evidence="1">6.3.5.3</ecNumber>
    </recommendedName>
    <alternativeName>
        <fullName evidence="1">Formylglycinamide ribonucleotide amidotransferase subunit I</fullName>
        <shortName evidence="1">FGAR amidotransferase I</shortName>
        <shortName evidence="1">FGAR-AT I</shortName>
    </alternativeName>
    <alternativeName>
        <fullName evidence="1">Glutaminase PurQ</fullName>
        <ecNumber evidence="1">3.5.1.2</ecNumber>
    </alternativeName>
    <alternativeName>
        <fullName evidence="1">Phosphoribosylformylglycinamidine synthase subunit I</fullName>
    </alternativeName>
</protein>
<reference key="1">
    <citation type="journal article" date="2000" name="Proc. Natl. Acad. Sci. U.S.A.">
        <title>Genome sequence of Halobacterium species NRC-1.</title>
        <authorList>
            <person name="Ng W.V."/>
            <person name="Kennedy S.P."/>
            <person name="Mahairas G.G."/>
            <person name="Berquist B."/>
            <person name="Pan M."/>
            <person name="Shukla H.D."/>
            <person name="Lasky S.R."/>
            <person name="Baliga N.S."/>
            <person name="Thorsson V."/>
            <person name="Sbrogna J."/>
            <person name="Swartzell S."/>
            <person name="Weir D."/>
            <person name="Hall J."/>
            <person name="Dahl T.A."/>
            <person name="Welti R."/>
            <person name="Goo Y.A."/>
            <person name="Leithauser B."/>
            <person name="Keller K."/>
            <person name="Cruz R."/>
            <person name="Danson M.J."/>
            <person name="Hough D.W."/>
            <person name="Maddocks D.G."/>
            <person name="Jablonski P.E."/>
            <person name="Krebs M.P."/>
            <person name="Angevine C.M."/>
            <person name="Dale H."/>
            <person name="Isenbarger T.A."/>
            <person name="Peck R.F."/>
            <person name="Pohlschroder M."/>
            <person name="Spudich J.L."/>
            <person name="Jung K.-H."/>
            <person name="Alam M."/>
            <person name="Freitas T."/>
            <person name="Hou S."/>
            <person name="Daniels C.J."/>
            <person name="Dennis P.P."/>
            <person name="Omer A.D."/>
            <person name="Ebhardt H."/>
            <person name="Lowe T.M."/>
            <person name="Liang P."/>
            <person name="Riley M."/>
            <person name="Hood L."/>
            <person name="DasSarma S."/>
        </authorList>
    </citation>
    <scope>NUCLEOTIDE SEQUENCE [LARGE SCALE GENOMIC DNA]</scope>
    <source>
        <strain>ATCC 700922 / JCM 11081 / NRC-1</strain>
    </source>
</reference>
<accession>Q9HNU2</accession>
<comment type="function">
    <text evidence="1">Part of the phosphoribosylformylglycinamidine synthase complex involved in the purines biosynthetic pathway. Catalyzes the ATP-dependent conversion of formylglycinamide ribonucleotide (FGAR) and glutamine to yield formylglycinamidine ribonucleotide (FGAM) and glutamate. The FGAM synthase complex is composed of three subunits. PurQ produces an ammonia molecule by converting glutamine to glutamate. PurL transfers the ammonia molecule to FGAR to form FGAM in an ATP-dependent manner. PurS interacts with PurQ and PurL and is thought to assist in the transfer of the ammonia molecule from PurQ to PurL.</text>
</comment>
<comment type="catalytic activity">
    <reaction evidence="1">
        <text>N(2)-formyl-N(1)-(5-phospho-beta-D-ribosyl)glycinamide + L-glutamine + ATP + H2O = 2-formamido-N(1)-(5-O-phospho-beta-D-ribosyl)acetamidine + L-glutamate + ADP + phosphate + H(+)</text>
        <dbReference type="Rhea" id="RHEA:17129"/>
        <dbReference type="ChEBI" id="CHEBI:15377"/>
        <dbReference type="ChEBI" id="CHEBI:15378"/>
        <dbReference type="ChEBI" id="CHEBI:29985"/>
        <dbReference type="ChEBI" id="CHEBI:30616"/>
        <dbReference type="ChEBI" id="CHEBI:43474"/>
        <dbReference type="ChEBI" id="CHEBI:58359"/>
        <dbReference type="ChEBI" id="CHEBI:147286"/>
        <dbReference type="ChEBI" id="CHEBI:147287"/>
        <dbReference type="ChEBI" id="CHEBI:456216"/>
        <dbReference type="EC" id="6.3.5.3"/>
    </reaction>
</comment>
<comment type="catalytic activity">
    <reaction evidence="1">
        <text>L-glutamine + H2O = L-glutamate + NH4(+)</text>
        <dbReference type="Rhea" id="RHEA:15889"/>
        <dbReference type="ChEBI" id="CHEBI:15377"/>
        <dbReference type="ChEBI" id="CHEBI:28938"/>
        <dbReference type="ChEBI" id="CHEBI:29985"/>
        <dbReference type="ChEBI" id="CHEBI:58359"/>
        <dbReference type="EC" id="3.5.1.2"/>
    </reaction>
</comment>
<comment type="pathway">
    <text evidence="1">Purine metabolism; IMP biosynthesis via de novo pathway; 5-amino-1-(5-phospho-D-ribosyl)imidazole from N(2)-formyl-N(1)-(5-phospho-D-ribosyl)glycinamide: step 1/2.</text>
</comment>
<comment type="subunit">
    <text evidence="1">Part of the FGAM synthase complex composed of 1 PurL, 1 PurQ and 2 PurS subunits.</text>
</comment>
<comment type="subcellular location">
    <subcellularLocation>
        <location evidence="1">Cytoplasm</location>
    </subcellularLocation>
</comment>
<organism>
    <name type="scientific">Halobacterium salinarum (strain ATCC 700922 / JCM 11081 / NRC-1)</name>
    <name type="common">Halobacterium halobium</name>
    <dbReference type="NCBI Taxonomy" id="64091"/>
    <lineage>
        <taxon>Archaea</taxon>
        <taxon>Methanobacteriati</taxon>
        <taxon>Methanobacteriota</taxon>
        <taxon>Stenosarchaea group</taxon>
        <taxon>Halobacteria</taxon>
        <taxon>Halobacteriales</taxon>
        <taxon>Halobacteriaceae</taxon>
        <taxon>Halobacterium</taxon>
        <taxon>Halobacterium salinarum NRC-34001</taxon>
    </lineage>
</organism>
<name>PURQ_HALSA</name>
<evidence type="ECO:0000255" key="1">
    <source>
        <dbReference type="HAMAP-Rule" id="MF_00421"/>
    </source>
</evidence>
<proteinExistence type="inferred from homology"/>
<feature type="chain" id="PRO_0000100606" description="Phosphoribosylformylglycinamidine synthase subunit PurQ">
    <location>
        <begin position="1"/>
        <end position="224"/>
    </location>
</feature>
<feature type="domain" description="Glutamine amidotransferase type-1" evidence="1">
    <location>
        <begin position="2"/>
        <end position="224"/>
    </location>
</feature>
<feature type="active site" description="Nucleophile" evidence="1">
    <location>
        <position position="85"/>
    </location>
</feature>
<feature type="active site" evidence="1">
    <location>
        <position position="202"/>
    </location>
</feature>
<feature type="active site" evidence="1">
    <location>
        <position position="204"/>
    </location>
</feature>